<dbReference type="EMBL" id="CP000414">
    <property type="protein sequence ID" value="ABJ61353.1"/>
    <property type="molecule type" value="Genomic_DNA"/>
</dbReference>
<dbReference type="RefSeq" id="WP_002816006.1">
    <property type="nucleotide sequence ID" value="NC_008531.1"/>
</dbReference>
<dbReference type="SMR" id="Q03ZL9"/>
<dbReference type="EnsemblBacteria" id="ABJ61353">
    <property type="protein sequence ID" value="ABJ61353"/>
    <property type="gene ID" value="LEUM_0222"/>
</dbReference>
<dbReference type="GeneID" id="97504955"/>
<dbReference type="KEGG" id="lme:LEUM_0222"/>
<dbReference type="eggNOG" id="COG0203">
    <property type="taxonomic scope" value="Bacteria"/>
</dbReference>
<dbReference type="HOGENOM" id="CLU_074407_2_2_9"/>
<dbReference type="Proteomes" id="UP000000362">
    <property type="component" value="Chromosome"/>
</dbReference>
<dbReference type="GO" id="GO:0022625">
    <property type="term" value="C:cytosolic large ribosomal subunit"/>
    <property type="evidence" value="ECO:0007669"/>
    <property type="project" value="TreeGrafter"/>
</dbReference>
<dbReference type="GO" id="GO:0003735">
    <property type="term" value="F:structural constituent of ribosome"/>
    <property type="evidence" value="ECO:0007669"/>
    <property type="project" value="InterPro"/>
</dbReference>
<dbReference type="GO" id="GO:0006412">
    <property type="term" value="P:translation"/>
    <property type="evidence" value="ECO:0007669"/>
    <property type="project" value="UniProtKB-UniRule"/>
</dbReference>
<dbReference type="FunFam" id="3.90.1030.10:FF:000002">
    <property type="entry name" value="50S ribosomal protein L17"/>
    <property type="match status" value="1"/>
</dbReference>
<dbReference type="Gene3D" id="3.90.1030.10">
    <property type="entry name" value="Ribosomal protein L17"/>
    <property type="match status" value="1"/>
</dbReference>
<dbReference type="HAMAP" id="MF_01368">
    <property type="entry name" value="Ribosomal_bL17"/>
    <property type="match status" value="1"/>
</dbReference>
<dbReference type="InterPro" id="IPR000456">
    <property type="entry name" value="Ribosomal_bL17"/>
</dbReference>
<dbReference type="InterPro" id="IPR047859">
    <property type="entry name" value="Ribosomal_bL17_CS"/>
</dbReference>
<dbReference type="InterPro" id="IPR036373">
    <property type="entry name" value="Ribosomal_bL17_sf"/>
</dbReference>
<dbReference type="NCBIfam" id="TIGR00059">
    <property type="entry name" value="L17"/>
    <property type="match status" value="1"/>
</dbReference>
<dbReference type="PANTHER" id="PTHR14413:SF16">
    <property type="entry name" value="LARGE RIBOSOMAL SUBUNIT PROTEIN BL17M"/>
    <property type="match status" value="1"/>
</dbReference>
<dbReference type="PANTHER" id="PTHR14413">
    <property type="entry name" value="RIBOSOMAL PROTEIN L17"/>
    <property type="match status" value="1"/>
</dbReference>
<dbReference type="Pfam" id="PF01196">
    <property type="entry name" value="Ribosomal_L17"/>
    <property type="match status" value="1"/>
</dbReference>
<dbReference type="SUPFAM" id="SSF64263">
    <property type="entry name" value="Prokaryotic ribosomal protein L17"/>
    <property type="match status" value="1"/>
</dbReference>
<dbReference type="PROSITE" id="PS01167">
    <property type="entry name" value="RIBOSOMAL_L17"/>
    <property type="match status" value="1"/>
</dbReference>
<sequence>MAYRKLGRTSSQRKAMLRDLTTDLLINGRITTTEARAKEVRKTTDKMITLGKRGDLNARRQAATFVRNEVADVIEDGDDVKVQSALQKLFDDVAPRFAERNGGYTRILKTVQRRGDAAQLVILELVD</sequence>
<keyword id="KW-1185">Reference proteome</keyword>
<keyword id="KW-0687">Ribonucleoprotein</keyword>
<keyword id="KW-0689">Ribosomal protein</keyword>
<comment type="subunit">
    <text evidence="1">Part of the 50S ribosomal subunit. Contacts protein L32.</text>
</comment>
<comment type="similarity">
    <text evidence="1">Belongs to the bacterial ribosomal protein bL17 family.</text>
</comment>
<evidence type="ECO:0000255" key="1">
    <source>
        <dbReference type="HAMAP-Rule" id="MF_01368"/>
    </source>
</evidence>
<evidence type="ECO:0000305" key="2"/>
<gene>
    <name evidence="1" type="primary">rplQ</name>
    <name type="ordered locus">LEUM_0222</name>
</gene>
<organism>
    <name type="scientific">Leuconostoc mesenteroides subsp. mesenteroides (strain ATCC 8293 / DSM 20343 / BCRC 11652 / CCM 1803 / JCM 6124 / NCDO 523 / NBRC 100496 / NCIMB 8023 / NCTC 12954 / NRRL B-1118 / 37Y)</name>
    <dbReference type="NCBI Taxonomy" id="203120"/>
    <lineage>
        <taxon>Bacteria</taxon>
        <taxon>Bacillati</taxon>
        <taxon>Bacillota</taxon>
        <taxon>Bacilli</taxon>
        <taxon>Lactobacillales</taxon>
        <taxon>Lactobacillaceae</taxon>
        <taxon>Leuconostoc</taxon>
    </lineage>
</organism>
<feature type="chain" id="PRO_1000055862" description="Large ribosomal subunit protein bL17">
    <location>
        <begin position="1"/>
        <end position="127"/>
    </location>
</feature>
<protein>
    <recommendedName>
        <fullName evidence="1">Large ribosomal subunit protein bL17</fullName>
    </recommendedName>
    <alternativeName>
        <fullName evidence="2">50S ribosomal protein L17</fullName>
    </alternativeName>
</protein>
<accession>Q03ZL9</accession>
<reference key="1">
    <citation type="journal article" date="2006" name="Proc. Natl. Acad. Sci. U.S.A.">
        <title>Comparative genomics of the lactic acid bacteria.</title>
        <authorList>
            <person name="Makarova K.S."/>
            <person name="Slesarev A."/>
            <person name="Wolf Y.I."/>
            <person name="Sorokin A."/>
            <person name="Mirkin B."/>
            <person name="Koonin E.V."/>
            <person name="Pavlov A."/>
            <person name="Pavlova N."/>
            <person name="Karamychev V."/>
            <person name="Polouchine N."/>
            <person name="Shakhova V."/>
            <person name="Grigoriev I."/>
            <person name="Lou Y."/>
            <person name="Rohksar D."/>
            <person name="Lucas S."/>
            <person name="Huang K."/>
            <person name="Goodstein D.M."/>
            <person name="Hawkins T."/>
            <person name="Plengvidhya V."/>
            <person name="Welker D."/>
            <person name="Hughes J."/>
            <person name="Goh Y."/>
            <person name="Benson A."/>
            <person name="Baldwin K."/>
            <person name="Lee J.-H."/>
            <person name="Diaz-Muniz I."/>
            <person name="Dosti B."/>
            <person name="Smeianov V."/>
            <person name="Wechter W."/>
            <person name="Barabote R."/>
            <person name="Lorca G."/>
            <person name="Altermann E."/>
            <person name="Barrangou R."/>
            <person name="Ganesan B."/>
            <person name="Xie Y."/>
            <person name="Rawsthorne H."/>
            <person name="Tamir D."/>
            <person name="Parker C."/>
            <person name="Breidt F."/>
            <person name="Broadbent J.R."/>
            <person name="Hutkins R."/>
            <person name="O'Sullivan D."/>
            <person name="Steele J."/>
            <person name="Unlu G."/>
            <person name="Saier M.H. Jr."/>
            <person name="Klaenhammer T."/>
            <person name="Richardson P."/>
            <person name="Kozyavkin S."/>
            <person name="Weimer B.C."/>
            <person name="Mills D.A."/>
        </authorList>
    </citation>
    <scope>NUCLEOTIDE SEQUENCE [LARGE SCALE GENOMIC DNA]</scope>
    <source>
        <strain>ATCC 8293 / DSM 20343 / BCRC 11652 / CCM 1803 / JCM 6124 / NCDO 523 / NBRC 100496 / NCIMB 8023 / NCTC 12954 / NRRL B-1118 / 37Y</strain>
    </source>
</reference>
<proteinExistence type="inferred from homology"/>
<name>RL17_LEUMM</name>